<organism>
    <name type="scientific">Cheracebus torquatus</name>
    <name type="common">Collared titi monkey</name>
    <name type="synonym">Callicebus torquatus</name>
    <dbReference type="NCBI Taxonomy" id="30592"/>
    <lineage>
        <taxon>Eukaryota</taxon>
        <taxon>Metazoa</taxon>
        <taxon>Chordata</taxon>
        <taxon>Craniata</taxon>
        <taxon>Vertebrata</taxon>
        <taxon>Euteleostomi</taxon>
        <taxon>Mammalia</taxon>
        <taxon>Eutheria</taxon>
        <taxon>Euarchontoglires</taxon>
        <taxon>Primates</taxon>
        <taxon>Haplorrhini</taxon>
        <taxon>Platyrrhini</taxon>
        <taxon>Pitheciidae</taxon>
        <taxon>Callicebinae</taxon>
        <taxon>Cheracebus</taxon>
    </lineage>
</organism>
<sequence>MVHFTAEEKAAITSLWGKMNVEEAGGEALGRLLVVYPWTQRFFDNFGNLSSPSAILGNPKVKAHGKKVLTSFGDAIKNMDNLKTTFAKLSELHCDKLHVDPENFRLLGNVMVIILATHFGKEFTPEVQAAWQKLVSAVAIALGHKYH</sequence>
<name>HBE_CHETO</name>
<dbReference type="EMBL" id="L25359">
    <property type="protein sequence ID" value="AAA35404.1"/>
    <property type="molecule type" value="Genomic_DNA"/>
</dbReference>
<dbReference type="SMR" id="P68023"/>
<dbReference type="GO" id="GO:0072562">
    <property type="term" value="C:blood microparticle"/>
    <property type="evidence" value="ECO:0007669"/>
    <property type="project" value="TreeGrafter"/>
</dbReference>
<dbReference type="GO" id="GO:0031838">
    <property type="term" value="C:haptoglobin-hemoglobin complex"/>
    <property type="evidence" value="ECO:0007669"/>
    <property type="project" value="TreeGrafter"/>
</dbReference>
<dbReference type="GO" id="GO:0005833">
    <property type="term" value="C:hemoglobin complex"/>
    <property type="evidence" value="ECO:0007669"/>
    <property type="project" value="InterPro"/>
</dbReference>
<dbReference type="GO" id="GO:0031720">
    <property type="term" value="F:haptoglobin binding"/>
    <property type="evidence" value="ECO:0007669"/>
    <property type="project" value="TreeGrafter"/>
</dbReference>
<dbReference type="GO" id="GO:0020037">
    <property type="term" value="F:heme binding"/>
    <property type="evidence" value="ECO:0007669"/>
    <property type="project" value="InterPro"/>
</dbReference>
<dbReference type="GO" id="GO:0031721">
    <property type="term" value="F:hemoglobin alpha binding"/>
    <property type="evidence" value="ECO:0007669"/>
    <property type="project" value="TreeGrafter"/>
</dbReference>
<dbReference type="GO" id="GO:0046872">
    <property type="term" value="F:metal ion binding"/>
    <property type="evidence" value="ECO:0007669"/>
    <property type="project" value="UniProtKB-KW"/>
</dbReference>
<dbReference type="GO" id="GO:0043177">
    <property type="term" value="F:organic acid binding"/>
    <property type="evidence" value="ECO:0007669"/>
    <property type="project" value="TreeGrafter"/>
</dbReference>
<dbReference type="GO" id="GO:0019825">
    <property type="term" value="F:oxygen binding"/>
    <property type="evidence" value="ECO:0007669"/>
    <property type="project" value="InterPro"/>
</dbReference>
<dbReference type="GO" id="GO:0005344">
    <property type="term" value="F:oxygen carrier activity"/>
    <property type="evidence" value="ECO:0007669"/>
    <property type="project" value="UniProtKB-KW"/>
</dbReference>
<dbReference type="GO" id="GO:0004601">
    <property type="term" value="F:peroxidase activity"/>
    <property type="evidence" value="ECO:0007669"/>
    <property type="project" value="TreeGrafter"/>
</dbReference>
<dbReference type="GO" id="GO:0042744">
    <property type="term" value="P:hydrogen peroxide catabolic process"/>
    <property type="evidence" value="ECO:0007669"/>
    <property type="project" value="TreeGrafter"/>
</dbReference>
<dbReference type="CDD" id="cd08925">
    <property type="entry name" value="Hb-beta-like"/>
    <property type="match status" value="1"/>
</dbReference>
<dbReference type="FunFam" id="1.10.490.10:FF:000001">
    <property type="entry name" value="Hemoglobin subunit beta"/>
    <property type="match status" value="1"/>
</dbReference>
<dbReference type="Gene3D" id="1.10.490.10">
    <property type="entry name" value="Globins"/>
    <property type="match status" value="1"/>
</dbReference>
<dbReference type="InterPro" id="IPR000971">
    <property type="entry name" value="Globin"/>
</dbReference>
<dbReference type="InterPro" id="IPR009050">
    <property type="entry name" value="Globin-like_sf"/>
</dbReference>
<dbReference type="InterPro" id="IPR012292">
    <property type="entry name" value="Globin/Proto"/>
</dbReference>
<dbReference type="InterPro" id="IPR002337">
    <property type="entry name" value="Hemoglobin_b"/>
</dbReference>
<dbReference type="InterPro" id="IPR050056">
    <property type="entry name" value="Hemoglobin_oxygen_transport"/>
</dbReference>
<dbReference type="PANTHER" id="PTHR11442">
    <property type="entry name" value="HEMOGLOBIN FAMILY MEMBER"/>
    <property type="match status" value="1"/>
</dbReference>
<dbReference type="PANTHER" id="PTHR11442:SF7">
    <property type="entry name" value="HEMOGLOBIN SUBUNIT EPSILON"/>
    <property type="match status" value="1"/>
</dbReference>
<dbReference type="Pfam" id="PF00042">
    <property type="entry name" value="Globin"/>
    <property type="match status" value="1"/>
</dbReference>
<dbReference type="PRINTS" id="PR00814">
    <property type="entry name" value="BETAHAEM"/>
</dbReference>
<dbReference type="SUPFAM" id="SSF46458">
    <property type="entry name" value="Globin-like"/>
    <property type="match status" value="1"/>
</dbReference>
<dbReference type="PROSITE" id="PS01033">
    <property type="entry name" value="GLOBIN"/>
    <property type="match status" value="1"/>
</dbReference>
<proteinExistence type="evidence at transcript level"/>
<accession>P68023</accession>
<accession>P43350</accession>
<feature type="chain" id="PRO_0000053197" description="Hemoglobin subunit epsilon">
    <location>
        <begin position="1"/>
        <end position="147"/>
    </location>
</feature>
<feature type="domain" description="Globin" evidence="2">
    <location>
        <begin position="3"/>
        <end position="147"/>
    </location>
</feature>
<feature type="binding site" description="distal binding residue" evidence="2">
    <location>
        <position position="64"/>
    </location>
    <ligand>
        <name>heme b</name>
        <dbReference type="ChEBI" id="CHEBI:60344"/>
    </ligand>
    <ligandPart>
        <name>Fe</name>
        <dbReference type="ChEBI" id="CHEBI:18248"/>
    </ligandPart>
</feature>
<feature type="binding site" description="proximal binding residue" evidence="2">
    <location>
        <position position="93"/>
    </location>
    <ligand>
        <name>heme b</name>
        <dbReference type="ChEBI" id="CHEBI:60344"/>
    </ligand>
    <ligandPart>
        <name>Fe</name>
        <dbReference type="ChEBI" id="CHEBI:18248"/>
    </ligandPart>
</feature>
<feature type="modified residue" description="Phosphoserine" evidence="1">
    <location>
        <position position="14"/>
    </location>
</feature>
<feature type="modified residue" description="Phosphoserine" evidence="1">
    <location>
        <position position="51"/>
    </location>
</feature>
<comment type="function">
    <text>The epsilon chain is a beta-type chain of early mammalian embryonic hemoglobin.</text>
</comment>
<comment type="subunit">
    <text>Heterotetramer of two alpha chains and two epsilon chains in early embryonic hemoglobin Gower-2; two zeta chains and two epsilon chains in early embryonic hemoglobin Gower-1.</text>
</comment>
<comment type="tissue specificity">
    <text>Red blood cells.</text>
</comment>
<comment type="similarity">
    <text evidence="2">Belongs to the globin family.</text>
</comment>
<evidence type="ECO:0000250" key="1">
    <source>
        <dbReference type="UniProtKB" id="P02100"/>
    </source>
</evidence>
<evidence type="ECO:0000255" key="2">
    <source>
        <dbReference type="PROSITE-ProRule" id="PRU00238"/>
    </source>
</evidence>
<protein>
    <recommendedName>
        <fullName>Hemoglobin subunit epsilon</fullName>
    </recommendedName>
    <alternativeName>
        <fullName>Epsilon-globin</fullName>
    </alternativeName>
    <alternativeName>
        <fullName>Hemoglobin epsilon chain</fullName>
    </alternativeName>
</protein>
<keyword id="KW-0349">Heme</keyword>
<keyword id="KW-0408">Iron</keyword>
<keyword id="KW-0479">Metal-binding</keyword>
<keyword id="KW-0561">Oxygen transport</keyword>
<keyword id="KW-0597">Phosphoprotein</keyword>
<keyword id="KW-0813">Transport</keyword>
<gene>
    <name type="primary">HBE1</name>
</gene>
<reference key="1">
    <citation type="journal article" date="1993" name="Mol. Phylogenet. Evol.">
        <title>Molecular phylogeny of the New World monkeys (Platyrrhini, primates).</title>
        <authorList>
            <person name="Schneider H."/>
            <person name="Schneider M.P.C."/>
            <person name="Sampaio I."/>
            <person name="Harada M.L."/>
            <person name="Stanhope M.J."/>
            <person name="Czekysbuaj J."/>
            <person name="Goodman M."/>
        </authorList>
    </citation>
    <scope>NUCLEOTIDE SEQUENCE [GENOMIC DNA]</scope>
    <source>
        <tissue>Lymphocyte</tissue>
    </source>
</reference>